<evidence type="ECO:0000255" key="1">
    <source>
        <dbReference type="HAMAP-Rule" id="MF_00108"/>
    </source>
</evidence>
<organism>
    <name type="scientific">Acidobacterium capsulatum (strain ATCC 51196 / DSM 11244 / BCRC 80197 / JCM 7670 / NBRC 15755 / NCIMB 13165 / 161)</name>
    <dbReference type="NCBI Taxonomy" id="240015"/>
    <lineage>
        <taxon>Bacteria</taxon>
        <taxon>Pseudomonadati</taxon>
        <taxon>Acidobacteriota</taxon>
        <taxon>Terriglobia</taxon>
        <taxon>Terriglobales</taxon>
        <taxon>Acidobacteriaceae</taxon>
        <taxon>Acidobacterium</taxon>
    </lineage>
</organism>
<reference key="1">
    <citation type="journal article" date="2009" name="Appl. Environ. Microbiol.">
        <title>Three genomes from the phylum Acidobacteria provide insight into the lifestyles of these microorganisms in soils.</title>
        <authorList>
            <person name="Ward N.L."/>
            <person name="Challacombe J.F."/>
            <person name="Janssen P.H."/>
            <person name="Henrissat B."/>
            <person name="Coutinho P.M."/>
            <person name="Wu M."/>
            <person name="Xie G."/>
            <person name="Haft D.H."/>
            <person name="Sait M."/>
            <person name="Badger J."/>
            <person name="Barabote R.D."/>
            <person name="Bradley B."/>
            <person name="Brettin T.S."/>
            <person name="Brinkac L.M."/>
            <person name="Bruce D."/>
            <person name="Creasy T."/>
            <person name="Daugherty S.C."/>
            <person name="Davidsen T.M."/>
            <person name="DeBoy R.T."/>
            <person name="Detter J.C."/>
            <person name="Dodson R.J."/>
            <person name="Durkin A.S."/>
            <person name="Ganapathy A."/>
            <person name="Gwinn-Giglio M."/>
            <person name="Han C.S."/>
            <person name="Khouri H."/>
            <person name="Kiss H."/>
            <person name="Kothari S.P."/>
            <person name="Madupu R."/>
            <person name="Nelson K.E."/>
            <person name="Nelson W.C."/>
            <person name="Paulsen I."/>
            <person name="Penn K."/>
            <person name="Ren Q."/>
            <person name="Rosovitz M.J."/>
            <person name="Selengut J.D."/>
            <person name="Shrivastava S."/>
            <person name="Sullivan S.A."/>
            <person name="Tapia R."/>
            <person name="Thompson L.S."/>
            <person name="Watkins K.L."/>
            <person name="Yang Q."/>
            <person name="Yu C."/>
            <person name="Zafar N."/>
            <person name="Zhou L."/>
            <person name="Kuske C.R."/>
        </authorList>
    </citation>
    <scope>NUCLEOTIDE SEQUENCE [LARGE SCALE GENOMIC DNA]</scope>
    <source>
        <strain>ATCC 51196 / DSM 11244 / BCRC 80197 / JCM 7670 / NBRC 15755 / NCIMB 13165 / 161</strain>
    </source>
</reference>
<proteinExistence type="inferred from homology"/>
<gene>
    <name evidence="1" type="primary">ispD</name>
    <name type="ordered locus">ACP_1617</name>
</gene>
<feature type="chain" id="PRO_1000191048" description="2-C-methyl-D-erythritol 4-phosphate cytidylyltransferase">
    <location>
        <begin position="1"/>
        <end position="239"/>
    </location>
</feature>
<feature type="site" description="Transition state stabilizer" evidence="1">
    <location>
        <position position="15"/>
    </location>
</feature>
<feature type="site" description="Transition state stabilizer" evidence="1">
    <location>
        <position position="27"/>
    </location>
</feature>
<feature type="site" description="Positions MEP for the nucleophilic attack" evidence="1">
    <location>
        <position position="163"/>
    </location>
</feature>
<feature type="site" description="Positions MEP for the nucleophilic attack" evidence="1">
    <location>
        <position position="219"/>
    </location>
</feature>
<comment type="function">
    <text evidence="1">Catalyzes the formation of 4-diphosphocytidyl-2-C-methyl-D-erythritol from CTP and 2-C-methyl-D-erythritol 4-phosphate (MEP).</text>
</comment>
<comment type="catalytic activity">
    <reaction evidence="1">
        <text>2-C-methyl-D-erythritol 4-phosphate + CTP + H(+) = 4-CDP-2-C-methyl-D-erythritol + diphosphate</text>
        <dbReference type="Rhea" id="RHEA:13429"/>
        <dbReference type="ChEBI" id="CHEBI:15378"/>
        <dbReference type="ChEBI" id="CHEBI:33019"/>
        <dbReference type="ChEBI" id="CHEBI:37563"/>
        <dbReference type="ChEBI" id="CHEBI:57823"/>
        <dbReference type="ChEBI" id="CHEBI:58262"/>
        <dbReference type="EC" id="2.7.7.60"/>
    </reaction>
</comment>
<comment type="pathway">
    <text evidence="1">Isoprenoid biosynthesis; isopentenyl diphosphate biosynthesis via DXP pathway; isopentenyl diphosphate from 1-deoxy-D-xylulose 5-phosphate: step 2/6.</text>
</comment>
<comment type="similarity">
    <text evidence="1">Belongs to the IspD/TarI cytidylyltransferase family. IspD subfamily.</text>
</comment>
<dbReference type="EC" id="2.7.7.60" evidence="1"/>
<dbReference type="EMBL" id="CP001472">
    <property type="protein sequence ID" value="ACO33402.1"/>
    <property type="molecule type" value="Genomic_DNA"/>
</dbReference>
<dbReference type="RefSeq" id="WP_015896743.1">
    <property type="nucleotide sequence ID" value="NC_012483.1"/>
</dbReference>
<dbReference type="SMR" id="C1F763"/>
<dbReference type="FunCoup" id="C1F763">
    <property type="interactions" value="470"/>
</dbReference>
<dbReference type="STRING" id="240015.ACP_1617"/>
<dbReference type="KEGG" id="aca:ACP_1617"/>
<dbReference type="eggNOG" id="COG1211">
    <property type="taxonomic scope" value="Bacteria"/>
</dbReference>
<dbReference type="HOGENOM" id="CLU_061281_2_2_0"/>
<dbReference type="InParanoid" id="C1F763"/>
<dbReference type="OrthoDB" id="9806837at2"/>
<dbReference type="UniPathway" id="UPA00056">
    <property type="reaction ID" value="UER00093"/>
</dbReference>
<dbReference type="Proteomes" id="UP000002207">
    <property type="component" value="Chromosome"/>
</dbReference>
<dbReference type="GO" id="GO:0050518">
    <property type="term" value="F:2-C-methyl-D-erythritol 4-phosphate cytidylyltransferase activity"/>
    <property type="evidence" value="ECO:0007669"/>
    <property type="project" value="UniProtKB-UniRule"/>
</dbReference>
<dbReference type="GO" id="GO:0019288">
    <property type="term" value="P:isopentenyl diphosphate biosynthetic process, methylerythritol 4-phosphate pathway"/>
    <property type="evidence" value="ECO:0007669"/>
    <property type="project" value="UniProtKB-UniRule"/>
</dbReference>
<dbReference type="CDD" id="cd02516">
    <property type="entry name" value="CDP-ME_synthetase"/>
    <property type="match status" value="1"/>
</dbReference>
<dbReference type="FunFam" id="3.90.550.10:FF:000003">
    <property type="entry name" value="2-C-methyl-D-erythritol 4-phosphate cytidylyltransferase"/>
    <property type="match status" value="1"/>
</dbReference>
<dbReference type="Gene3D" id="3.90.550.10">
    <property type="entry name" value="Spore Coat Polysaccharide Biosynthesis Protein SpsA, Chain A"/>
    <property type="match status" value="1"/>
</dbReference>
<dbReference type="HAMAP" id="MF_00108">
    <property type="entry name" value="IspD"/>
    <property type="match status" value="1"/>
</dbReference>
<dbReference type="InterPro" id="IPR001228">
    <property type="entry name" value="IspD"/>
</dbReference>
<dbReference type="InterPro" id="IPR034683">
    <property type="entry name" value="IspD/TarI"/>
</dbReference>
<dbReference type="InterPro" id="IPR050088">
    <property type="entry name" value="IspD/TarI_cytidylyltransf_bact"/>
</dbReference>
<dbReference type="InterPro" id="IPR018294">
    <property type="entry name" value="ISPD_synthase_CS"/>
</dbReference>
<dbReference type="InterPro" id="IPR029044">
    <property type="entry name" value="Nucleotide-diphossugar_trans"/>
</dbReference>
<dbReference type="NCBIfam" id="TIGR00453">
    <property type="entry name" value="ispD"/>
    <property type="match status" value="1"/>
</dbReference>
<dbReference type="PANTHER" id="PTHR32125">
    <property type="entry name" value="2-C-METHYL-D-ERYTHRITOL 4-PHOSPHATE CYTIDYLYLTRANSFERASE, CHLOROPLASTIC"/>
    <property type="match status" value="1"/>
</dbReference>
<dbReference type="PANTHER" id="PTHR32125:SF4">
    <property type="entry name" value="2-C-METHYL-D-ERYTHRITOL 4-PHOSPHATE CYTIDYLYLTRANSFERASE, CHLOROPLASTIC"/>
    <property type="match status" value="1"/>
</dbReference>
<dbReference type="Pfam" id="PF01128">
    <property type="entry name" value="IspD"/>
    <property type="match status" value="1"/>
</dbReference>
<dbReference type="SUPFAM" id="SSF53448">
    <property type="entry name" value="Nucleotide-diphospho-sugar transferases"/>
    <property type="match status" value="1"/>
</dbReference>
<dbReference type="PROSITE" id="PS01295">
    <property type="entry name" value="ISPD"/>
    <property type="match status" value="1"/>
</dbReference>
<sequence>MRVFVILPAAGLGTRMAAGSHTPHQPKQFLELEGVPVLIHTLRAFAAVPAVSAMIVAVRPNEIERVQAQVNEYGFQDKVRVVAGGDSRQQSVSRALATVECDASDIVLVHDAVRPLIEPAVIARTIEAVEKSGAAIVGLPAVDTIKQVERTAAGAIITATIPREYIVQAQTPQGFRCELLRRAFAEAEADGFTGTDEASLVERAGAQVTVVPGSPSNMKITQPGDLELAAFYLRQRSSR</sequence>
<accession>C1F763</accession>
<name>ISPD_ACIC5</name>
<protein>
    <recommendedName>
        <fullName evidence="1">2-C-methyl-D-erythritol 4-phosphate cytidylyltransferase</fullName>
        <ecNumber evidence="1">2.7.7.60</ecNumber>
    </recommendedName>
    <alternativeName>
        <fullName evidence="1">4-diphosphocytidyl-2C-methyl-D-erythritol synthase</fullName>
    </alternativeName>
    <alternativeName>
        <fullName evidence="1">MEP cytidylyltransferase</fullName>
        <shortName evidence="1">MCT</shortName>
    </alternativeName>
</protein>
<keyword id="KW-0414">Isoprene biosynthesis</keyword>
<keyword id="KW-0548">Nucleotidyltransferase</keyword>
<keyword id="KW-1185">Reference proteome</keyword>
<keyword id="KW-0808">Transferase</keyword>